<reference key="1">
    <citation type="journal article" date="2002" name="Proc. Natl. Acad. Sci. U.S.A.">
        <title>Genome sequence of the hyperthermophilic crenarchaeon Pyrobaculum aerophilum.</title>
        <authorList>
            <person name="Fitz-Gibbon S.T."/>
            <person name="Ladner H."/>
            <person name="Kim U.-J."/>
            <person name="Stetter K.O."/>
            <person name="Simon M.I."/>
            <person name="Miller J.H."/>
        </authorList>
    </citation>
    <scope>NUCLEOTIDE SEQUENCE [LARGE SCALE GENOMIC DNA]</scope>
    <source>
        <strain>ATCC 51768 / DSM 7523 / JCM 9630 / CIP 104966 / NBRC 100827 / IM2</strain>
    </source>
</reference>
<gene>
    <name evidence="1" type="primary">ribH</name>
    <name type="ordered locus">PAE3296</name>
</gene>
<feature type="chain" id="PRO_0000134849" description="6,7-dimethyl-8-ribityllumazine synthase">
    <location>
        <begin position="1"/>
        <end position="150"/>
    </location>
</feature>
<feature type="active site" description="Proton donor" evidence="1">
    <location>
        <position position="75"/>
    </location>
</feature>
<feature type="binding site" evidence="1">
    <location>
        <position position="11"/>
    </location>
    <ligand>
        <name>5-amino-6-(D-ribitylamino)uracil</name>
        <dbReference type="ChEBI" id="CHEBI:15934"/>
    </ligand>
</feature>
<feature type="binding site" evidence="1">
    <location>
        <begin position="43"/>
        <end position="45"/>
    </location>
    <ligand>
        <name>5-amino-6-(D-ribitylamino)uracil</name>
        <dbReference type="ChEBI" id="CHEBI:15934"/>
    </ligand>
</feature>
<feature type="binding site" evidence="1">
    <location>
        <begin position="67"/>
        <end position="69"/>
    </location>
    <ligand>
        <name>5-amino-6-(D-ribitylamino)uracil</name>
        <dbReference type="ChEBI" id="CHEBI:15934"/>
    </ligand>
</feature>
<feature type="binding site" evidence="1">
    <location>
        <begin position="72"/>
        <end position="73"/>
    </location>
    <ligand>
        <name>(2S)-2-hydroxy-3-oxobutyl phosphate</name>
        <dbReference type="ChEBI" id="CHEBI:58830"/>
    </ligand>
</feature>
<feature type="binding site" evidence="1">
    <location>
        <position position="100"/>
    </location>
    <ligand>
        <name>5-amino-6-(D-ribitylamino)uracil</name>
        <dbReference type="ChEBI" id="CHEBI:15934"/>
    </ligand>
</feature>
<feature type="binding site" evidence="1">
    <location>
        <position position="115"/>
    </location>
    <ligand>
        <name>(2S)-2-hydroxy-3-oxobutyl phosphate</name>
        <dbReference type="ChEBI" id="CHEBI:58830"/>
    </ligand>
</feature>
<proteinExistence type="inferred from homology"/>
<protein>
    <recommendedName>
        <fullName evidence="1">6,7-dimethyl-8-ribityllumazine synthase</fullName>
        <shortName evidence="1">DMRL synthase</shortName>
        <shortName evidence="1">LS</shortName>
        <shortName evidence="1">Lumazine synthase</shortName>
        <ecNumber evidence="1">2.5.1.78</ecNumber>
    </recommendedName>
</protein>
<name>RISB_PYRAE</name>
<organism>
    <name type="scientific">Pyrobaculum aerophilum (strain ATCC 51768 / DSM 7523 / JCM 9630 / CIP 104966 / NBRC 100827 / IM2)</name>
    <dbReference type="NCBI Taxonomy" id="178306"/>
    <lineage>
        <taxon>Archaea</taxon>
        <taxon>Thermoproteota</taxon>
        <taxon>Thermoprotei</taxon>
        <taxon>Thermoproteales</taxon>
        <taxon>Thermoproteaceae</taxon>
        <taxon>Pyrobaculum</taxon>
    </lineage>
</organism>
<evidence type="ECO:0000255" key="1">
    <source>
        <dbReference type="HAMAP-Rule" id="MF_00178"/>
    </source>
</evidence>
<sequence length="150" mass="16474">MVRLAIVVAEFNYDITQLMLQKAVEHAKFLGAEITYIVKTPGVYDIPMILKELVAKEEVDAVATLGAVIQGATKHDELVATQAARKILDIAVESGKPITLGIIGHGANRIQALERVEEYARRAVEAAVKMARRKKALREAKYNGSTVYID</sequence>
<accession>Q8ZTE3</accession>
<keyword id="KW-1185">Reference proteome</keyword>
<keyword id="KW-0686">Riboflavin biosynthesis</keyword>
<keyword id="KW-0808">Transferase</keyword>
<comment type="function">
    <text evidence="1">Catalyzes the formation of 6,7-dimethyl-8-ribityllumazine by condensation of 5-amino-6-(D-ribitylamino)uracil with 3,4-dihydroxy-2-butanone 4-phosphate. This is the penultimate step in the biosynthesis of riboflavin.</text>
</comment>
<comment type="catalytic activity">
    <reaction evidence="1">
        <text>(2S)-2-hydroxy-3-oxobutyl phosphate + 5-amino-6-(D-ribitylamino)uracil = 6,7-dimethyl-8-(1-D-ribityl)lumazine + phosphate + 2 H2O + H(+)</text>
        <dbReference type="Rhea" id="RHEA:26152"/>
        <dbReference type="ChEBI" id="CHEBI:15377"/>
        <dbReference type="ChEBI" id="CHEBI:15378"/>
        <dbReference type="ChEBI" id="CHEBI:15934"/>
        <dbReference type="ChEBI" id="CHEBI:43474"/>
        <dbReference type="ChEBI" id="CHEBI:58201"/>
        <dbReference type="ChEBI" id="CHEBI:58830"/>
        <dbReference type="EC" id="2.5.1.78"/>
    </reaction>
</comment>
<comment type="pathway">
    <text evidence="1">Cofactor biosynthesis; riboflavin biosynthesis; riboflavin from 2-hydroxy-3-oxobutyl phosphate and 5-amino-6-(D-ribitylamino)uracil: step 1/2.</text>
</comment>
<comment type="similarity">
    <text evidence="1">Belongs to the DMRL synthase family.</text>
</comment>
<dbReference type="EC" id="2.5.1.78" evidence="1"/>
<dbReference type="EMBL" id="AE009441">
    <property type="protein sequence ID" value="AAL64819.1"/>
    <property type="molecule type" value="Genomic_DNA"/>
</dbReference>
<dbReference type="RefSeq" id="WP_011009286.1">
    <property type="nucleotide sequence ID" value="NC_003364.1"/>
</dbReference>
<dbReference type="SMR" id="Q8ZTE3"/>
<dbReference type="FunCoup" id="Q8ZTE3">
    <property type="interactions" value="117"/>
</dbReference>
<dbReference type="STRING" id="178306.PAE3296"/>
<dbReference type="EnsemblBacteria" id="AAL64819">
    <property type="protein sequence ID" value="AAL64819"/>
    <property type="gene ID" value="PAE3296"/>
</dbReference>
<dbReference type="GeneID" id="1464008"/>
<dbReference type="KEGG" id="pai:PAE3296"/>
<dbReference type="PATRIC" id="fig|178306.9.peg.2481"/>
<dbReference type="eggNOG" id="arCOG01323">
    <property type="taxonomic scope" value="Archaea"/>
</dbReference>
<dbReference type="HOGENOM" id="CLU_089358_3_1_2"/>
<dbReference type="InParanoid" id="Q8ZTE3"/>
<dbReference type="BRENDA" id="2.5.1.78">
    <property type="organism ID" value="5239"/>
</dbReference>
<dbReference type="UniPathway" id="UPA00275">
    <property type="reaction ID" value="UER00404"/>
</dbReference>
<dbReference type="Proteomes" id="UP000002439">
    <property type="component" value="Chromosome"/>
</dbReference>
<dbReference type="GO" id="GO:0005737">
    <property type="term" value="C:cytoplasm"/>
    <property type="evidence" value="ECO:0000318"/>
    <property type="project" value="GO_Central"/>
</dbReference>
<dbReference type="GO" id="GO:0009349">
    <property type="term" value="C:riboflavin synthase complex"/>
    <property type="evidence" value="ECO:0007669"/>
    <property type="project" value="InterPro"/>
</dbReference>
<dbReference type="GO" id="GO:0000906">
    <property type="term" value="F:6,7-dimethyl-8-ribityllumazine synthase activity"/>
    <property type="evidence" value="ECO:0000318"/>
    <property type="project" value="GO_Central"/>
</dbReference>
<dbReference type="GO" id="GO:0009231">
    <property type="term" value="P:riboflavin biosynthetic process"/>
    <property type="evidence" value="ECO:0000318"/>
    <property type="project" value="GO_Central"/>
</dbReference>
<dbReference type="CDD" id="cd09211">
    <property type="entry name" value="Lumazine_synthase_archaeal"/>
    <property type="match status" value="1"/>
</dbReference>
<dbReference type="FunFam" id="3.40.50.960:FF:000003">
    <property type="entry name" value="6,7-dimethyl-8-ribityllumazine synthase"/>
    <property type="match status" value="1"/>
</dbReference>
<dbReference type="Gene3D" id="3.40.50.960">
    <property type="entry name" value="Lumazine/riboflavin synthase"/>
    <property type="match status" value="1"/>
</dbReference>
<dbReference type="HAMAP" id="MF_00178">
    <property type="entry name" value="Lumazine_synth"/>
    <property type="match status" value="1"/>
</dbReference>
<dbReference type="InterPro" id="IPR034964">
    <property type="entry name" value="LS"/>
</dbReference>
<dbReference type="InterPro" id="IPR002180">
    <property type="entry name" value="LS/RS"/>
</dbReference>
<dbReference type="InterPro" id="IPR036467">
    <property type="entry name" value="LS/RS_sf"/>
</dbReference>
<dbReference type="NCBIfam" id="TIGR00114">
    <property type="entry name" value="lumazine-synth"/>
    <property type="match status" value="1"/>
</dbReference>
<dbReference type="PANTHER" id="PTHR21058:SF0">
    <property type="entry name" value="6,7-DIMETHYL-8-RIBITYLLUMAZINE SYNTHASE"/>
    <property type="match status" value="1"/>
</dbReference>
<dbReference type="PANTHER" id="PTHR21058">
    <property type="entry name" value="6,7-DIMETHYL-8-RIBITYLLUMAZINE SYNTHASE DMRL SYNTHASE LUMAZINE SYNTHASE"/>
    <property type="match status" value="1"/>
</dbReference>
<dbReference type="Pfam" id="PF00885">
    <property type="entry name" value="DMRL_synthase"/>
    <property type="match status" value="1"/>
</dbReference>
<dbReference type="SUPFAM" id="SSF52121">
    <property type="entry name" value="Lumazine synthase"/>
    <property type="match status" value="1"/>
</dbReference>